<gene>
    <name evidence="5" type="primary">Zdhhc24</name>
</gene>
<reference key="1">
    <citation type="journal article" date="2005" name="Science">
        <title>The transcriptional landscape of the mammalian genome.</title>
        <authorList>
            <person name="Carninci P."/>
            <person name="Kasukawa T."/>
            <person name="Katayama S."/>
            <person name="Gough J."/>
            <person name="Frith M.C."/>
            <person name="Maeda N."/>
            <person name="Oyama R."/>
            <person name="Ravasi T."/>
            <person name="Lenhard B."/>
            <person name="Wells C."/>
            <person name="Kodzius R."/>
            <person name="Shimokawa K."/>
            <person name="Bajic V.B."/>
            <person name="Brenner S.E."/>
            <person name="Batalov S."/>
            <person name="Forrest A.R."/>
            <person name="Zavolan M."/>
            <person name="Davis M.J."/>
            <person name="Wilming L.G."/>
            <person name="Aidinis V."/>
            <person name="Allen J.E."/>
            <person name="Ambesi-Impiombato A."/>
            <person name="Apweiler R."/>
            <person name="Aturaliya R.N."/>
            <person name="Bailey T.L."/>
            <person name="Bansal M."/>
            <person name="Baxter L."/>
            <person name="Beisel K.W."/>
            <person name="Bersano T."/>
            <person name="Bono H."/>
            <person name="Chalk A.M."/>
            <person name="Chiu K.P."/>
            <person name="Choudhary V."/>
            <person name="Christoffels A."/>
            <person name="Clutterbuck D.R."/>
            <person name="Crowe M.L."/>
            <person name="Dalla E."/>
            <person name="Dalrymple B.P."/>
            <person name="de Bono B."/>
            <person name="Della Gatta G."/>
            <person name="di Bernardo D."/>
            <person name="Down T."/>
            <person name="Engstrom P."/>
            <person name="Fagiolini M."/>
            <person name="Faulkner G."/>
            <person name="Fletcher C.F."/>
            <person name="Fukushima T."/>
            <person name="Furuno M."/>
            <person name="Futaki S."/>
            <person name="Gariboldi M."/>
            <person name="Georgii-Hemming P."/>
            <person name="Gingeras T.R."/>
            <person name="Gojobori T."/>
            <person name="Green R.E."/>
            <person name="Gustincich S."/>
            <person name="Harbers M."/>
            <person name="Hayashi Y."/>
            <person name="Hensch T.K."/>
            <person name="Hirokawa N."/>
            <person name="Hill D."/>
            <person name="Huminiecki L."/>
            <person name="Iacono M."/>
            <person name="Ikeo K."/>
            <person name="Iwama A."/>
            <person name="Ishikawa T."/>
            <person name="Jakt M."/>
            <person name="Kanapin A."/>
            <person name="Katoh M."/>
            <person name="Kawasawa Y."/>
            <person name="Kelso J."/>
            <person name="Kitamura H."/>
            <person name="Kitano H."/>
            <person name="Kollias G."/>
            <person name="Krishnan S.P."/>
            <person name="Kruger A."/>
            <person name="Kummerfeld S.K."/>
            <person name="Kurochkin I.V."/>
            <person name="Lareau L.F."/>
            <person name="Lazarevic D."/>
            <person name="Lipovich L."/>
            <person name="Liu J."/>
            <person name="Liuni S."/>
            <person name="McWilliam S."/>
            <person name="Madan Babu M."/>
            <person name="Madera M."/>
            <person name="Marchionni L."/>
            <person name="Matsuda H."/>
            <person name="Matsuzawa S."/>
            <person name="Miki H."/>
            <person name="Mignone F."/>
            <person name="Miyake S."/>
            <person name="Morris K."/>
            <person name="Mottagui-Tabar S."/>
            <person name="Mulder N."/>
            <person name="Nakano N."/>
            <person name="Nakauchi H."/>
            <person name="Ng P."/>
            <person name="Nilsson R."/>
            <person name="Nishiguchi S."/>
            <person name="Nishikawa S."/>
            <person name="Nori F."/>
            <person name="Ohara O."/>
            <person name="Okazaki Y."/>
            <person name="Orlando V."/>
            <person name="Pang K.C."/>
            <person name="Pavan W.J."/>
            <person name="Pavesi G."/>
            <person name="Pesole G."/>
            <person name="Petrovsky N."/>
            <person name="Piazza S."/>
            <person name="Reed J."/>
            <person name="Reid J.F."/>
            <person name="Ring B.Z."/>
            <person name="Ringwald M."/>
            <person name="Rost B."/>
            <person name="Ruan Y."/>
            <person name="Salzberg S.L."/>
            <person name="Sandelin A."/>
            <person name="Schneider C."/>
            <person name="Schoenbach C."/>
            <person name="Sekiguchi K."/>
            <person name="Semple C.A."/>
            <person name="Seno S."/>
            <person name="Sessa L."/>
            <person name="Sheng Y."/>
            <person name="Shibata Y."/>
            <person name="Shimada H."/>
            <person name="Shimada K."/>
            <person name="Silva D."/>
            <person name="Sinclair B."/>
            <person name="Sperling S."/>
            <person name="Stupka E."/>
            <person name="Sugiura K."/>
            <person name="Sultana R."/>
            <person name="Takenaka Y."/>
            <person name="Taki K."/>
            <person name="Tammoja K."/>
            <person name="Tan S.L."/>
            <person name="Tang S."/>
            <person name="Taylor M.S."/>
            <person name="Tegner J."/>
            <person name="Teichmann S.A."/>
            <person name="Ueda H.R."/>
            <person name="van Nimwegen E."/>
            <person name="Verardo R."/>
            <person name="Wei C.L."/>
            <person name="Yagi K."/>
            <person name="Yamanishi H."/>
            <person name="Zabarovsky E."/>
            <person name="Zhu S."/>
            <person name="Zimmer A."/>
            <person name="Hide W."/>
            <person name="Bult C."/>
            <person name="Grimmond S.M."/>
            <person name="Teasdale R.D."/>
            <person name="Liu E.T."/>
            <person name="Brusic V."/>
            <person name="Quackenbush J."/>
            <person name="Wahlestedt C."/>
            <person name="Mattick J.S."/>
            <person name="Hume D.A."/>
            <person name="Kai C."/>
            <person name="Sasaki D."/>
            <person name="Tomaru Y."/>
            <person name="Fukuda S."/>
            <person name="Kanamori-Katayama M."/>
            <person name="Suzuki M."/>
            <person name="Aoki J."/>
            <person name="Arakawa T."/>
            <person name="Iida J."/>
            <person name="Imamura K."/>
            <person name="Itoh M."/>
            <person name="Kato T."/>
            <person name="Kawaji H."/>
            <person name="Kawagashira N."/>
            <person name="Kawashima T."/>
            <person name="Kojima M."/>
            <person name="Kondo S."/>
            <person name="Konno H."/>
            <person name="Nakano K."/>
            <person name="Ninomiya N."/>
            <person name="Nishio T."/>
            <person name="Okada M."/>
            <person name="Plessy C."/>
            <person name="Shibata K."/>
            <person name="Shiraki T."/>
            <person name="Suzuki S."/>
            <person name="Tagami M."/>
            <person name="Waki K."/>
            <person name="Watahiki A."/>
            <person name="Okamura-Oho Y."/>
            <person name="Suzuki H."/>
            <person name="Kawai J."/>
            <person name="Hayashizaki Y."/>
        </authorList>
    </citation>
    <scope>NUCLEOTIDE SEQUENCE [LARGE SCALE MRNA]</scope>
    <source>
        <strain>C57BL/6J</strain>
        <strain>NOD</strain>
        <tissue>Embryo</tissue>
        <tissue>Kidney</tissue>
    </source>
</reference>
<reference key="2">
    <citation type="journal article" date="2004" name="Genome Res.">
        <title>The status, quality, and expansion of the NIH full-length cDNA project: the Mammalian Gene Collection (MGC).</title>
        <authorList>
            <consortium name="The MGC Project Team"/>
        </authorList>
    </citation>
    <scope>NUCLEOTIDE SEQUENCE [LARGE SCALE MRNA]</scope>
    <source>
        <tissue>Mammary tumor</tissue>
    </source>
</reference>
<feature type="chain" id="PRO_0000233711" description="Probable palmitoyltransferase ZDHHC24">
    <location>
        <begin position="1"/>
        <end position="284"/>
    </location>
</feature>
<feature type="topological domain" description="Cytoplasmic" evidence="4">
    <location>
        <begin position="1"/>
        <end position="18"/>
    </location>
</feature>
<feature type="transmembrane region" description="Helical" evidence="2">
    <location>
        <begin position="19"/>
        <end position="39"/>
    </location>
</feature>
<feature type="topological domain" description="Extracellular" evidence="4">
    <location>
        <begin position="40"/>
        <end position="52"/>
    </location>
</feature>
<feature type="transmembrane region" description="Helical" evidence="2">
    <location>
        <begin position="53"/>
        <end position="73"/>
    </location>
</feature>
<feature type="topological domain" description="Cytoplasmic" evidence="4">
    <location>
        <begin position="74"/>
        <end position="137"/>
    </location>
</feature>
<feature type="transmembrane region" description="Helical" evidence="2">
    <location>
        <begin position="138"/>
        <end position="158"/>
    </location>
</feature>
<feature type="topological domain" description="Extracellular" evidence="4">
    <location>
        <begin position="159"/>
        <end position="166"/>
    </location>
</feature>
<feature type="transmembrane region" description="Helical" evidence="2">
    <location>
        <begin position="167"/>
        <end position="187"/>
    </location>
</feature>
<feature type="topological domain" description="Cytoplasmic" evidence="4">
    <location>
        <begin position="188"/>
        <end position="195"/>
    </location>
</feature>
<feature type="transmembrane region" description="Helical" evidence="2">
    <location>
        <begin position="196"/>
        <end position="216"/>
    </location>
</feature>
<feature type="topological domain" description="Extracellular" evidence="4">
    <location>
        <begin position="217"/>
        <end position="284"/>
    </location>
</feature>
<feature type="domain" description="DHHC" evidence="3">
    <location>
        <begin position="94"/>
        <end position="144"/>
    </location>
</feature>
<feature type="active site" description="S-palmitoyl cysteine intermediate" evidence="3">
    <location>
        <position position="124"/>
    </location>
</feature>
<feature type="sequence conflict" description="In Ref. 1; BAE41089." evidence="4" ref="1">
    <original>S</original>
    <variation>P</variation>
    <location>
        <position position="4"/>
    </location>
</feature>
<feature type="sequence conflict" description="In Ref. 1; BAE41651." evidence="4" ref="1">
    <original>E</original>
    <variation>G</variation>
    <location>
        <position position="32"/>
    </location>
</feature>
<feature type="sequence conflict" description="In Ref. 2; BC071194." evidence="4" ref="2">
    <original>G</original>
    <variation>D</variation>
    <location>
        <position position="128"/>
    </location>
</feature>
<accession>Q6IR37</accession>
<accession>Q3TAY4</accession>
<accession>Q3TDF1</accession>
<accession>Q3TF09</accession>
<accession>Q9CS66</accession>
<comment type="function">
    <text evidence="4">Probable palmitoyltransferase that could catalyze the addition of palmitate onto various protein substrates.</text>
</comment>
<comment type="catalytic activity">
    <reaction evidence="4">
        <text>L-cysteinyl-[protein] + hexadecanoyl-CoA = S-hexadecanoyl-L-cysteinyl-[protein] + CoA</text>
        <dbReference type="Rhea" id="RHEA:36683"/>
        <dbReference type="Rhea" id="RHEA-COMP:10131"/>
        <dbReference type="Rhea" id="RHEA-COMP:11032"/>
        <dbReference type="ChEBI" id="CHEBI:29950"/>
        <dbReference type="ChEBI" id="CHEBI:57287"/>
        <dbReference type="ChEBI" id="CHEBI:57379"/>
        <dbReference type="ChEBI" id="CHEBI:74151"/>
        <dbReference type="EC" id="2.3.1.225"/>
    </reaction>
    <physiologicalReaction direction="left-to-right" evidence="4">
        <dbReference type="Rhea" id="RHEA:36684"/>
    </physiologicalReaction>
</comment>
<comment type="subcellular location">
    <subcellularLocation>
        <location evidence="2">Membrane</location>
        <topology evidence="2">Multi-pass membrane protein</topology>
    </subcellularLocation>
</comment>
<comment type="domain">
    <text evidence="1">The DHHC domain is required for palmitoyltransferase activity.</text>
</comment>
<comment type="similarity">
    <text evidence="4">Belongs to the DHHC palmitoyltransferase family.</text>
</comment>
<comment type="sequence caution" evidence="4">
    <conflict type="frameshift">
        <sequence resource="EMBL-CDS" id="BAB30905"/>
    </conflict>
</comment>
<evidence type="ECO:0000250" key="1">
    <source>
        <dbReference type="UniProtKB" id="Q8IUH5"/>
    </source>
</evidence>
<evidence type="ECO:0000255" key="2"/>
<evidence type="ECO:0000255" key="3">
    <source>
        <dbReference type="PROSITE-ProRule" id="PRU00067"/>
    </source>
</evidence>
<evidence type="ECO:0000305" key="4"/>
<evidence type="ECO:0000312" key="5">
    <source>
        <dbReference type="MGI" id="MGI:1917855"/>
    </source>
</evidence>
<name>ZDH24_MOUSE</name>
<dbReference type="EC" id="2.3.1.225" evidence="4"/>
<dbReference type="EMBL" id="AK017737">
    <property type="protein sequence ID" value="BAB30905.2"/>
    <property type="status" value="ALT_FRAME"/>
    <property type="molecule type" value="mRNA"/>
</dbReference>
<dbReference type="EMBL" id="AK169337">
    <property type="protein sequence ID" value="BAE41089.1"/>
    <property type="molecule type" value="mRNA"/>
</dbReference>
<dbReference type="EMBL" id="AK170233">
    <property type="protein sequence ID" value="BAE41651.1"/>
    <property type="molecule type" value="mRNA"/>
</dbReference>
<dbReference type="EMBL" id="AK170706">
    <property type="protein sequence ID" value="BAE41967.1"/>
    <property type="molecule type" value="mRNA"/>
</dbReference>
<dbReference type="EMBL" id="AK171568">
    <property type="protein sequence ID" value="BAE42530.1"/>
    <property type="molecule type" value="mRNA"/>
</dbReference>
<dbReference type="EMBL" id="BC071194">
    <property type="status" value="NOT_ANNOTATED_CDS"/>
    <property type="molecule type" value="mRNA"/>
</dbReference>
<dbReference type="CCDS" id="CCDS50353.1"/>
<dbReference type="RefSeq" id="NP_081752.2">
    <property type="nucleotide sequence ID" value="NM_027476.3"/>
</dbReference>
<dbReference type="SMR" id="Q6IR37"/>
<dbReference type="FunCoup" id="Q6IR37">
    <property type="interactions" value="1795"/>
</dbReference>
<dbReference type="STRING" id="10090.ENSMUSP00000006632"/>
<dbReference type="PhosphoSitePlus" id="Q6IR37"/>
<dbReference type="PaxDb" id="10090-ENSMUSP00000006632"/>
<dbReference type="ProteomicsDB" id="275342"/>
<dbReference type="Antibodypedia" id="16343">
    <property type="antibodies" value="95 antibodies from 15 providers"/>
</dbReference>
<dbReference type="DNASU" id="70605"/>
<dbReference type="Ensembl" id="ENSMUST00000006632.8">
    <property type="protein sequence ID" value="ENSMUSP00000006632.8"/>
    <property type="gene ID" value="ENSMUSG00000006463.14"/>
</dbReference>
<dbReference type="GeneID" id="70605"/>
<dbReference type="KEGG" id="mmu:70605"/>
<dbReference type="UCSC" id="uc008gbh.2">
    <property type="organism name" value="mouse"/>
</dbReference>
<dbReference type="AGR" id="MGI:1917855"/>
<dbReference type="CTD" id="254359"/>
<dbReference type="MGI" id="MGI:1917855">
    <property type="gene designation" value="Zdhhc24"/>
</dbReference>
<dbReference type="VEuPathDB" id="HostDB:ENSMUSG00000006463"/>
<dbReference type="eggNOG" id="KOG1311">
    <property type="taxonomic scope" value="Eukaryota"/>
</dbReference>
<dbReference type="GeneTree" id="ENSGT00940000162361"/>
<dbReference type="HOGENOM" id="CLU_027721_5_2_1"/>
<dbReference type="InParanoid" id="Q6IR37"/>
<dbReference type="OMA" id="RMHLTWL"/>
<dbReference type="OrthoDB" id="302728at2759"/>
<dbReference type="PhylomeDB" id="Q6IR37"/>
<dbReference type="TreeFam" id="TF319523"/>
<dbReference type="BioGRID-ORCS" id="70605">
    <property type="hits" value="2 hits in 78 CRISPR screens"/>
</dbReference>
<dbReference type="ChiTaRS" id="Zdhhc24">
    <property type="organism name" value="mouse"/>
</dbReference>
<dbReference type="PRO" id="PR:Q6IR37"/>
<dbReference type="Proteomes" id="UP000000589">
    <property type="component" value="Chromosome 19"/>
</dbReference>
<dbReference type="RNAct" id="Q6IR37">
    <property type="molecule type" value="protein"/>
</dbReference>
<dbReference type="Bgee" id="ENSMUSG00000006463">
    <property type="expression patterns" value="Expressed in secondary oocyte and 211 other cell types or tissues"/>
</dbReference>
<dbReference type="ExpressionAtlas" id="Q6IR37">
    <property type="expression patterns" value="baseline and differential"/>
</dbReference>
<dbReference type="GO" id="GO:0016020">
    <property type="term" value="C:membrane"/>
    <property type="evidence" value="ECO:0007669"/>
    <property type="project" value="UniProtKB-SubCell"/>
</dbReference>
<dbReference type="GO" id="GO:0019706">
    <property type="term" value="F:protein-cysteine S-palmitoyltransferase activity"/>
    <property type="evidence" value="ECO:0007669"/>
    <property type="project" value="UniProtKB-EC"/>
</dbReference>
<dbReference type="InterPro" id="IPR001594">
    <property type="entry name" value="Palmitoyltrfase_DHHC"/>
</dbReference>
<dbReference type="InterPro" id="IPR039859">
    <property type="entry name" value="PFA4/ZDH16/20/ERF2-like"/>
</dbReference>
<dbReference type="PANTHER" id="PTHR22883:SF414">
    <property type="entry name" value="PALMITOYLTRANSFERASE ZDHHC24-RELATED"/>
    <property type="match status" value="1"/>
</dbReference>
<dbReference type="PANTHER" id="PTHR22883">
    <property type="entry name" value="ZINC FINGER DHHC DOMAIN CONTAINING PROTEIN"/>
    <property type="match status" value="1"/>
</dbReference>
<dbReference type="Pfam" id="PF01529">
    <property type="entry name" value="DHHC"/>
    <property type="match status" value="1"/>
</dbReference>
<dbReference type="PROSITE" id="PS50216">
    <property type="entry name" value="DHHC"/>
    <property type="match status" value="1"/>
</dbReference>
<proteinExistence type="evidence at transcript level"/>
<sequence>MGESWAARGAEGAPARMPLVLTALWAAVVVLELAYVMVLGPGPPPLGPLARALQLALAAYQLLNLLGNVVLFLRSDPSIRGVMLAGRGLGQGWAYCYQCQSQVPPRSGHCSACRVCILRRDHHCRLLGCCVGFHNYRPFLCLLLHSAGVLLHISVLLGPALSALLQAHSALYTVALLLLPWLMLLTGKVSLAQFALAFVVDTCVAGALLCGAGLLFHGMLLLRGQTTWEWARGHHCYDLGTCHNLQAALGPRWALVWFWPFLASPLPGDGISFQTPGDVGLVTS</sequence>
<keyword id="KW-0012">Acyltransferase</keyword>
<keyword id="KW-0449">Lipoprotein</keyword>
<keyword id="KW-0472">Membrane</keyword>
<keyword id="KW-0564">Palmitate</keyword>
<keyword id="KW-1185">Reference proteome</keyword>
<keyword id="KW-0808">Transferase</keyword>
<keyword id="KW-0812">Transmembrane</keyword>
<keyword id="KW-1133">Transmembrane helix</keyword>
<protein>
    <recommendedName>
        <fullName evidence="4">Probable palmitoyltransferase ZDHHC24</fullName>
        <ecNumber evidence="4">2.3.1.225</ecNumber>
    </recommendedName>
    <alternativeName>
        <fullName evidence="5">Zinc finger DHHC domain-containing protein 24</fullName>
    </alternativeName>
</protein>
<organism>
    <name type="scientific">Mus musculus</name>
    <name type="common">Mouse</name>
    <dbReference type="NCBI Taxonomy" id="10090"/>
    <lineage>
        <taxon>Eukaryota</taxon>
        <taxon>Metazoa</taxon>
        <taxon>Chordata</taxon>
        <taxon>Craniata</taxon>
        <taxon>Vertebrata</taxon>
        <taxon>Euteleostomi</taxon>
        <taxon>Mammalia</taxon>
        <taxon>Eutheria</taxon>
        <taxon>Euarchontoglires</taxon>
        <taxon>Glires</taxon>
        <taxon>Rodentia</taxon>
        <taxon>Myomorpha</taxon>
        <taxon>Muroidea</taxon>
        <taxon>Muridae</taxon>
        <taxon>Murinae</taxon>
        <taxon>Mus</taxon>
        <taxon>Mus</taxon>
    </lineage>
</organism>